<proteinExistence type="evidence at protein level"/>
<gene>
    <name type="primary">NAC69</name>
    <name evidence="6" type="synonym">NTL13</name>
    <name type="synonym">NTM2</name>
    <name type="ordered locus">At4g01550</name>
    <name type="ORF">F11O4.5</name>
</gene>
<keyword id="KW-0010">Activator</keyword>
<keyword id="KW-0025">Alternative splicing</keyword>
<keyword id="KW-0238">DNA-binding</keyword>
<keyword id="KW-0472">Membrane</keyword>
<keyword id="KW-0539">Nucleus</keyword>
<keyword id="KW-1185">Reference proteome</keyword>
<keyword id="KW-0346">Stress response</keyword>
<keyword id="KW-0804">Transcription</keyword>
<keyword id="KW-0805">Transcription regulation</keyword>
<keyword id="KW-0812">Transmembrane</keyword>
<keyword id="KW-1133">Transmembrane helix</keyword>
<reference key="1">
    <citation type="journal article" date="1999" name="Nature">
        <title>Sequence and analysis of chromosome 4 of the plant Arabidopsis thaliana.</title>
        <authorList>
            <person name="Mayer K.F.X."/>
            <person name="Schueller C."/>
            <person name="Wambutt R."/>
            <person name="Murphy G."/>
            <person name="Volckaert G."/>
            <person name="Pohl T."/>
            <person name="Duesterhoeft A."/>
            <person name="Stiekema W."/>
            <person name="Entian K.-D."/>
            <person name="Terryn N."/>
            <person name="Harris B."/>
            <person name="Ansorge W."/>
            <person name="Brandt P."/>
            <person name="Grivell L.A."/>
            <person name="Rieger M."/>
            <person name="Weichselgartner M."/>
            <person name="de Simone V."/>
            <person name="Obermaier B."/>
            <person name="Mache R."/>
            <person name="Mueller M."/>
            <person name="Kreis M."/>
            <person name="Delseny M."/>
            <person name="Puigdomenech P."/>
            <person name="Watson M."/>
            <person name="Schmidtheini T."/>
            <person name="Reichert B."/>
            <person name="Portetelle D."/>
            <person name="Perez-Alonso M."/>
            <person name="Boutry M."/>
            <person name="Bancroft I."/>
            <person name="Vos P."/>
            <person name="Hoheisel J."/>
            <person name="Zimmermann W."/>
            <person name="Wedler H."/>
            <person name="Ridley P."/>
            <person name="Langham S.-A."/>
            <person name="McCullagh B."/>
            <person name="Bilham L."/>
            <person name="Robben J."/>
            <person name="van der Schueren J."/>
            <person name="Grymonprez B."/>
            <person name="Chuang Y.-J."/>
            <person name="Vandenbussche F."/>
            <person name="Braeken M."/>
            <person name="Weltjens I."/>
            <person name="Voet M."/>
            <person name="Bastiaens I."/>
            <person name="Aert R."/>
            <person name="Defoor E."/>
            <person name="Weitzenegger T."/>
            <person name="Bothe G."/>
            <person name="Ramsperger U."/>
            <person name="Hilbert H."/>
            <person name="Braun M."/>
            <person name="Holzer E."/>
            <person name="Brandt A."/>
            <person name="Peters S."/>
            <person name="van Staveren M."/>
            <person name="Dirkse W."/>
            <person name="Mooijman P."/>
            <person name="Klein Lankhorst R."/>
            <person name="Rose M."/>
            <person name="Hauf J."/>
            <person name="Koetter P."/>
            <person name="Berneiser S."/>
            <person name="Hempel S."/>
            <person name="Feldpausch M."/>
            <person name="Lamberth S."/>
            <person name="Van den Daele H."/>
            <person name="De Keyser A."/>
            <person name="Buysshaert C."/>
            <person name="Gielen J."/>
            <person name="Villarroel R."/>
            <person name="De Clercq R."/>
            <person name="van Montagu M."/>
            <person name="Rogers J."/>
            <person name="Cronin A."/>
            <person name="Quail M.A."/>
            <person name="Bray-Allen S."/>
            <person name="Clark L."/>
            <person name="Doggett J."/>
            <person name="Hall S."/>
            <person name="Kay M."/>
            <person name="Lennard N."/>
            <person name="McLay K."/>
            <person name="Mayes R."/>
            <person name="Pettett A."/>
            <person name="Rajandream M.A."/>
            <person name="Lyne M."/>
            <person name="Benes V."/>
            <person name="Rechmann S."/>
            <person name="Borkova D."/>
            <person name="Bloecker H."/>
            <person name="Scharfe M."/>
            <person name="Grimm M."/>
            <person name="Loehnert T.-H."/>
            <person name="Dose S."/>
            <person name="de Haan M."/>
            <person name="Maarse A.C."/>
            <person name="Schaefer M."/>
            <person name="Mueller-Auer S."/>
            <person name="Gabel C."/>
            <person name="Fuchs M."/>
            <person name="Fartmann B."/>
            <person name="Granderath K."/>
            <person name="Dauner D."/>
            <person name="Herzl A."/>
            <person name="Neumann S."/>
            <person name="Argiriou A."/>
            <person name="Vitale D."/>
            <person name="Liguori R."/>
            <person name="Piravandi E."/>
            <person name="Massenet O."/>
            <person name="Quigley F."/>
            <person name="Clabauld G."/>
            <person name="Muendlein A."/>
            <person name="Felber R."/>
            <person name="Schnabl S."/>
            <person name="Hiller R."/>
            <person name="Schmidt W."/>
            <person name="Lecharny A."/>
            <person name="Aubourg S."/>
            <person name="Chefdor F."/>
            <person name="Cooke R."/>
            <person name="Berger C."/>
            <person name="Monfort A."/>
            <person name="Casacuberta E."/>
            <person name="Gibbons T."/>
            <person name="Weber N."/>
            <person name="Vandenbol M."/>
            <person name="Bargues M."/>
            <person name="Terol J."/>
            <person name="Torres A."/>
            <person name="Perez-Perez A."/>
            <person name="Purnelle B."/>
            <person name="Bent E."/>
            <person name="Johnson S."/>
            <person name="Tacon D."/>
            <person name="Jesse T."/>
            <person name="Heijnen L."/>
            <person name="Schwarz S."/>
            <person name="Scholler P."/>
            <person name="Heber S."/>
            <person name="Francs P."/>
            <person name="Bielke C."/>
            <person name="Frishman D."/>
            <person name="Haase D."/>
            <person name="Lemcke K."/>
            <person name="Mewes H.-W."/>
            <person name="Stocker S."/>
            <person name="Zaccaria P."/>
            <person name="Bevan M."/>
            <person name="Wilson R.K."/>
            <person name="de la Bastide M."/>
            <person name="Habermann K."/>
            <person name="Parnell L."/>
            <person name="Dedhia N."/>
            <person name="Gnoj L."/>
            <person name="Schutz K."/>
            <person name="Huang E."/>
            <person name="Spiegel L."/>
            <person name="Sekhon M."/>
            <person name="Murray J."/>
            <person name="Sheet P."/>
            <person name="Cordes M."/>
            <person name="Abu-Threideh J."/>
            <person name="Stoneking T."/>
            <person name="Kalicki J."/>
            <person name="Graves T."/>
            <person name="Harmon G."/>
            <person name="Edwards J."/>
            <person name="Latreille P."/>
            <person name="Courtney L."/>
            <person name="Cloud J."/>
            <person name="Abbott A."/>
            <person name="Scott K."/>
            <person name="Johnson D."/>
            <person name="Minx P."/>
            <person name="Bentley D."/>
            <person name="Fulton B."/>
            <person name="Miller N."/>
            <person name="Greco T."/>
            <person name="Kemp K."/>
            <person name="Kramer J."/>
            <person name="Fulton L."/>
            <person name="Mardis E."/>
            <person name="Dante M."/>
            <person name="Pepin K."/>
            <person name="Hillier L.W."/>
            <person name="Nelson J."/>
            <person name="Spieth J."/>
            <person name="Ryan E."/>
            <person name="Andrews S."/>
            <person name="Geisel C."/>
            <person name="Layman D."/>
            <person name="Du H."/>
            <person name="Ali J."/>
            <person name="Berghoff A."/>
            <person name="Jones K."/>
            <person name="Drone K."/>
            <person name="Cotton M."/>
            <person name="Joshu C."/>
            <person name="Antonoiu B."/>
            <person name="Zidanic M."/>
            <person name="Strong C."/>
            <person name="Sun H."/>
            <person name="Lamar B."/>
            <person name="Yordan C."/>
            <person name="Ma P."/>
            <person name="Zhong J."/>
            <person name="Preston R."/>
            <person name="Vil D."/>
            <person name="Shekher M."/>
            <person name="Matero A."/>
            <person name="Shah R."/>
            <person name="Swaby I.K."/>
            <person name="O'Shaughnessy A."/>
            <person name="Rodriguez M."/>
            <person name="Hoffman J."/>
            <person name="Till S."/>
            <person name="Granat S."/>
            <person name="Shohdy N."/>
            <person name="Hasegawa A."/>
            <person name="Hameed A."/>
            <person name="Lodhi M."/>
            <person name="Johnson A."/>
            <person name="Chen E."/>
            <person name="Marra M.A."/>
            <person name="Martienssen R."/>
            <person name="McCombie W.R."/>
        </authorList>
    </citation>
    <scope>NUCLEOTIDE SEQUENCE [LARGE SCALE GENOMIC DNA]</scope>
    <source>
        <strain>cv. Columbia</strain>
    </source>
</reference>
<reference key="2">
    <citation type="journal article" date="2017" name="Plant J.">
        <title>Araport11: a complete reannotation of the Arabidopsis thaliana reference genome.</title>
        <authorList>
            <person name="Cheng C.Y."/>
            <person name="Krishnakumar V."/>
            <person name="Chan A.P."/>
            <person name="Thibaud-Nissen F."/>
            <person name="Schobel S."/>
            <person name="Town C.D."/>
        </authorList>
    </citation>
    <scope>GENOME REANNOTATION</scope>
    <source>
        <strain>cv. Columbia</strain>
    </source>
</reference>
<reference key="3">
    <citation type="submission" date="2006-07" db="EMBL/GenBank/DDBJ databases">
        <title>Large-scale analysis of RIKEN Arabidopsis full-length (RAFL) cDNAs.</title>
        <authorList>
            <person name="Totoki Y."/>
            <person name="Seki M."/>
            <person name="Ishida J."/>
            <person name="Nakajima M."/>
            <person name="Enju A."/>
            <person name="Kamiya A."/>
            <person name="Narusaka M."/>
            <person name="Shin-i T."/>
            <person name="Nakagawa M."/>
            <person name="Sakamoto N."/>
            <person name="Oishi K."/>
            <person name="Kohara Y."/>
            <person name="Kobayashi M."/>
            <person name="Toyoda A."/>
            <person name="Sakaki Y."/>
            <person name="Sakurai T."/>
            <person name="Iida K."/>
            <person name="Akiyama K."/>
            <person name="Satou M."/>
            <person name="Toyoda T."/>
            <person name="Konagaya A."/>
            <person name="Carninci P."/>
            <person name="Kawai J."/>
            <person name="Hayashizaki Y."/>
            <person name="Shinozaki K."/>
        </authorList>
    </citation>
    <scope>NUCLEOTIDE SEQUENCE [LARGE SCALE MRNA] (ISOFORM 1)</scope>
    <source>
        <strain>cv. Columbia</strain>
    </source>
</reference>
<reference key="4">
    <citation type="journal article" date="2003" name="DNA Res.">
        <title>Comprehensive analysis of NAC family genes in Oryza sativa and Arabidopsis thaliana.</title>
        <authorList>
            <person name="Ooka H."/>
            <person name="Satoh K."/>
            <person name="Doi K."/>
            <person name="Nagata T."/>
            <person name="Otomo Y."/>
            <person name="Murakami K."/>
            <person name="Matsubara K."/>
            <person name="Osato N."/>
            <person name="Kawai J."/>
            <person name="Carninci P."/>
            <person name="Hayashizaki Y."/>
            <person name="Suzuki K."/>
            <person name="Kojima K."/>
            <person name="Takahara Y."/>
            <person name="Yamamoto K."/>
            <person name="Kikuchi S."/>
        </authorList>
    </citation>
    <scope>GENE FAMILY</scope>
    <scope>NOMENCLATURE</scope>
</reference>
<reference key="5">
    <citation type="journal article" date="2006" name="Plant Cell">
        <title>A membrane-bound NAC transcription factor regulates cell division in Arabidopsis.</title>
        <authorList>
            <person name="Kim Y.-S."/>
            <person name="Kim S.-G."/>
            <person name="Park J.-E."/>
            <person name="Park H.-Y."/>
            <person name="Lim M.-H."/>
            <person name="Chua N.-H."/>
            <person name="Park C.-M."/>
        </authorList>
    </citation>
    <scope>GENE FAMILY</scope>
</reference>
<reference key="6">
    <citation type="journal article" date="2007" name="Nucleic Acids Res.">
        <title>Exploring membrane-associated NAC transcription factors in Arabidopsis: implications for membrane biology in genome regulation.</title>
        <authorList>
            <person name="Kim S.Y."/>
            <person name="Kim S.G."/>
            <person name="Kim Y.S."/>
            <person name="Seo P.J."/>
            <person name="Bae M."/>
            <person name="Yoon H.K."/>
            <person name="Park C.M."/>
        </authorList>
    </citation>
    <scope>GENE FAMILY</scope>
    <scope>NOMENCLATURE</scope>
</reference>
<reference key="7">
    <citation type="journal article" date="2011" name="Plant Physiol.">
        <title>Integration of auxin and salt signals by the NAC transcription factor NTM2 during seed germination in Arabidopsis.</title>
        <authorList>
            <person name="Park J."/>
            <person name="Kim Y.S."/>
            <person name="Kim S.G."/>
            <person name="Jung J.H."/>
            <person name="Woo J.C."/>
            <person name="Park C.M."/>
        </authorList>
    </citation>
    <scope>FUNCTION</scope>
    <scope>SUBCELLULAR LOCATION</scope>
    <scope>INDUCTION</scope>
    <scope>DISRUPTION PHENOTYPE</scope>
</reference>
<accession>Q9M126</accession>
<accession>A8MRW7</accession>
<accession>O82590</accession>
<evidence type="ECO:0000255" key="1"/>
<evidence type="ECO:0000255" key="2">
    <source>
        <dbReference type="PROSITE-ProRule" id="PRU00353"/>
    </source>
</evidence>
<evidence type="ECO:0000256" key="3">
    <source>
        <dbReference type="SAM" id="MobiDB-lite"/>
    </source>
</evidence>
<evidence type="ECO:0000269" key="4">
    <source>
    </source>
</evidence>
<evidence type="ECO:0000303" key="5">
    <source>
    </source>
</evidence>
<evidence type="ECO:0000303" key="6">
    <source>
    </source>
</evidence>
<evidence type="ECO:0000305" key="7"/>
<dbReference type="EMBL" id="AF096370">
    <property type="protein sequence ID" value="AAC62781.1"/>
    <property type="status" value="ALT_SEQ"/>
    <property type="molecule type" value="Genomic_DNA"/>
</dbReference>
<dbReference type="EMBL" id="AL161492">
    <property type="protein sequence ID" value="CAB77725.1"/>
    <property type="molecule type" value="Genomic_DNA"/>
</dbReference>
<dbReference type="EMBL" id="CP002687">
    <property type="protein sequence ID" value="AEE82040.1"/>
    <property type="molecule type" value="Genomic_DNA"/>
</dbReference>
<dbReference type="EMBL" id="CP002687">
    <property type="protein sequence ID" value="AEE82041.1"/>
    <property type="molecule type" value="Genomic_DNA"/>
</dbReference>
<dbReference type="EMBL" id="AK229312">
    <property type="protein sequence ID" value="BAF01175.1"/>
    <property type="molecule type" value="mRNA"/>
</dbReference>
<dbReference type="PIR" id="B85020">
    <property type="entry name" value="B85020"/>
</dbReference>
<dbReference type="PIR" id="T01939">
    <property type="entry name" value="T01939"/>
</dbReference>
<dbReference type="RefSeq" id="NP_001078344.1">
    <molecule id="Q9M126-2"/>
    <property type="nucleotide sequence ID" value="NM_001084875.1"/>
</dbReference>
<dbReference type="RefSeq" id="NP_192064.1">
    <molecule id="Q9M126-1"/>
    <property type="nucleotide sequence ID" value="NM_116385.4"/>
</dbReference>
<dbReference type="SMR" id="Q9M126"/>
<dbReference type="BioGRID" id="13433">
    <property type="interactions" value="8"/>
</dbReference>
<dbReference type="FunCoup" id="Q9M126">
    <property type="interactions" value="3"/>
</dbReference>
<dbReference type="IntAct" id="Q9M126">
    <property type="interactions" value="7"/>
</dbReference>
<dbReference type="STRING" id="3702.Q9M126"/>
<dbReference type="iPTMnet" id="Q9M126"/>
<dbReference type="PaxDb" id="3702-AT4G01550.1"/>
<dbReference type="ProteomicsDB" id="251283">
    <molecule id="Q9M126-1"/>
</dbReference>
<dbReference type="EnsemblPlants" id="AT4G01550.1">
    <molecule id="Q9M126-1"/>
    <property type="protein sequence ID" value="AT4G01550.1"/>
    <property type="gene ID" value="AT4G01550"/>
</dbReference>
<dbReference type="EnsemblPlants" id="AT4G01550.2">
    <molecule id="Q9M126-2"/>
    <property type="protein sequence ID" value="AT4G01550.2"/>
    <property type="gene ID" value="AT4G01550"/>
</dbReference>
<dbReference type="GeneID" id="828144"/>
<dbReference type="Gramene" id="AT4G01550.1">
    <molecule id="Q9M126-1"/>
    <property type="protein sequence ID" value="AT4G01550.1"/>
    <property type="gene ID" value="AT4G01550"/>
</dbReference>
<dbReference type="Gramene" id="AT4G01550.2">
    <molecule id="Q9M126-2"/>
    <property type="protein sequence ID" value="AT4G01550.2"/>
    <property type="gene ID" value="AT4G01550"/>
</dbReference>
<dbReference type="KEGG" id="ath:AT4G01550"/>
<dbReference type="Araport" id="AT4G01550"/>
<dbReference type="TAIR" id="AT4G01550">
    <property type="gene designation" value="NAC069"/>
</dbReference>
<dbReference type="eggNOG" id="ENOG502SPZ5">
    <property type="taxonomic scope" value="Eukaryota"/>
</dbReference>
<dbReference type="HOGENOM" id="CLU_035664_16_1_1"/>
<dbReference type="InParanoid" id="Q9M126"/>
<dbReference type="OMA" id="RENQSNH"/>
<dbReference type="PhylomeDB" id="Q9M126"/>
<dbReference type="PRO" id="PR:Q9M126"/>
<dbReference type="Proteomes" id="UP000006548">
    <property type="component" value="Chromosome 4"/>
</dbReference>
<dbReference type="ExpressionAtlas" id="Q9M126">
    <property type="expression patterns" value="baseline and differential"/>
</dbReference>
<dbReference type="GO" id="GO:0005634">
    <property type="term" value="C:nucleus"/>
    <property type="evidence" value="ECO:0000314"/>
    <property type="project" value="TAIR"/>
</dbReference>
<dbReference type="GO" id="GO:0005886">
    <property type="term" value="C:plasma membrane"/>
    <property type="evidence" value="ECO:0000314"/>
    <property type="project" value="TAIR"/>
</dbReference>
<dbReference type="GO" id="GO:0003677">
    <property type="term" value="F:DNA binding"/>
    <property type="evidence" value="ECO:0007669"/>
    <property type="project" value="UniProtKB-KW"/>
</dbReference>
<dbReference type="GO" id="GO:0003700">
    <property type="term" value="F:DNA-binding transcription factor activity"/>
    <property type="evidence" value="ECO:0000250"/>
    <property type="project" value="TAIR"/>
</dbReference>
<dbReference type="GO" id="GO:0045893">
    <property type="term" value="P:positive regulation of DNA-templated transcription"/>
    <property type="evidence" value="ECO:0000314"/>
    <property type="project" value="TAIR"/>
</dbReference>
<dbReference type="FunFam" id="2.170.150.80:FF:000012">
    <property type="entry name" value="NAC with transmembrane motif1"/>
    <property type="match status" value="1"/>
</dbReference>
<dbReference type="Gene3D" id="2.170.150.80">
    <property type="entry name" value="NAC domain"/>
    <property type="match status" value="1"/>
</dbReference>
<dbReference type="InterPro" id="IPR003441">
    <property type="entry name" value="NAC-dom"/>
</dbReference>
<dbReference type="InterPro" id="IPR036093">
    <property type="entry name" value="NAC_dom_sf"/>
</dbReference>
<dbReference type="PANTHER" id="PTHR31989">
    <property type="entry name" value="NAC DOMAIN-CONTAINING PROTEIN 82-RELATED"/>
    <property type="match status" value="1"/>
</dbReference>
<dbReference type="Pfam" id="PF02365">
    <property type="entry name" value="NAM"/>
    <property type="match status" value="1"/>
</dbReference>
<dbReference type="SUPFAM" id="SSF101941">
    <property type="entry name" value="NAC domain"/>
    <property type="match status" value="1"/>
</dbReference>
<dbReference type="PROSITE" id="PS51005">
    <property type="entry name" value="NAC"/>
    <property type="match status" value="1"/>
</dbReference>
<sequence>MVKDLVGYRFYPTGEELINHYLKNKILGKTWLVDEAISEINICSYDPIYLPSLSKIKSDDPVWYFFCPKEYTSAKKKVTKRTTSSGYWKATGVDRKIKDKRGNRGEIGIKKTLVYYEGRVPKGVWTPWVMHEYHITCLPQDQRNYVICQVMYKGEDGDVPSGGNNSSEPSQSLVSDSNTVRATSPTALEFEKPGQENFFGMSVDDLGTPKNEQEDFSLWDVLDPDMLFSDNNNPTVHPQAPHLTPNDDEFLGGLRHVNREQVEYLFANEDFISRPTLSMTENRNDHRPKKALSGIIVDYSSDSNSDAESISATSYQGTSSPGDDSVGSSNRQFLQTGGDEILSSCNDLQTYGEPSISSSTRQSQLTRSIIRPKQEVKQDTSRAVDSDTSIDKESSMVKTEKKSWFITEEAMERNRNNPRYIYLMRMIIGFILLLALISNIISVLQNLNPAMKFDRER</sequence>
<feature type="chain" id="PRO_0000323715" description="NAC domain-containing protein 69">
    <location>
        <begin position="1"/>
        <end position="457"/>
    </location>
</feature>
<feature type="transmembrane region" description="Helical" evidence="1">
    <location>
        <begin position="421"/>
        <end position="441"/>
    </location>
</feature>
<feature type="domain" description="NAC" evidence="2">
    <location>
        <begin position="4"/>
        <end position="153"/>
    </location>
</feature>
<feature type="DNA-binding region" evidence="2">
    <location>
        <begin position="107"/>
        <end position="159"/>
    </location>
</feature>
<feature type="region of interest" description="Disordered" evidence="3">
    <location>
        <begin position="158"/>
        <end position="180"/>
    </location>
</feature>
<feature type="region of interest" description="Disordered" evidence="3">
    <location>
        <begin position="302"/>
        <end position="332"/>
    </location>
</feature>
<feature type="compositionally biased region" description="Polar residues" evidence="3">
    <location>
        <begin position="162"/>
        <end position="180"/>
    </location>
</feature>
<feature type="compositionally biased region" description="Low complexity" evidence="3">
    <location>
        <begin position="302"/>
        <end position="311"/>
    </location>
</feature>
<feature type="compositionally biased region" description="Polar residues" evidence="3">
    <location>
        <begin position="312"/>
        <end position="332"/>
    </location>
</feature>
<feature type="splice variant" id="VSP_032053" description="In isoform 2." evidence="7">
    <location>
        <begin position="1"/>
        <end position="129"/>
    </location>
</feature>
<feature type="splice variant" id="VSP_032054" description="In isoform 3." evidence="7">
    <original>D</original>
    <variation>DPVWYFFCPKEYTSAKKKVKDLVGYRFYPTGEELINHYLKNKILALSKIKSDD</variation>
    <location>
        <position position="60"/>
    </location>
</feature>
<feature type="splice variant" id="VSP_032055" description="In isoform 3." evidence="7">
    <original>SYQGTSSPGDDSVGSSNRQFLQTGGDEILSSCNDLQTYGEPSISSSTRQSQLTRSIIRPKQEVKQDTSRAVDSDTSIDKESSMVKTEKKSWFITEEAMERNRNNPRYIYLMRMIIGFILLLAL</original>
    <variation>VKQITRFLYRYFCAVISILTF</variation>
    <location>
        <begin position="314"/>
        <end position="436"/>
    </location>
</feature>
<organism>
    <name type="scientific">Arabidopsis thaliana</name>
    <name type="common">Mouse-ear cress</name>
    <dbReference type="NCBI Taxonomy" id="3702"/>
    <lineage>
        <taxon>Eukaryota</taxon>
        <taxon>Viridiplantae</taxon>
        <taxon>Streptophyta</taxon>
        <taxon>Embryophyta</taxon>
        <taxon>Tracheophyta</taxon>
        <taxon>Spermatophyta</taxon>
        <taxon>Magnoliopsida</taxon>
        <taxon>eudicotyledons</taxon>
        <taxon>Gunneridae</taxon>
        <taxon>Pentapetalae</taxon>
        <taxon>rosids</taxon>
        <taxon>malvids</taxon>
        <taxon>Brassicales</taxon>
        <taxon>Brassicaceae</taxon>
        <taxon>Camelineae</taxon>
        <taxon>Arabidopsis</taxon>
    </lineage>
</organism>
<name>NAC69_ARATH</name>
<comment type="function">
    <text evidence="4">Transcription activator activated by proteolytic cleavage through regulated intramembrane proteolysis (RIP). Involved in salt stress response during seed germination and seedling growth. Binds the auxin-responsive IAA30 gene promoter and may serve as a molecular link that interconnects a developmental feedback loop of auxin signaling with a salt signal transduction pathway during seed germination (PubMed:21450938).</text>
</comment>
<comment type="interaction">
    <interactant intactId="EBI-15191931">
        <id>Q9M126</id>
    </interactant>
    <interactant intactId="EBI-15191933">
        <id>Q9FLM0</id>
        <label>NAC095</label>
    </interactant>
    <organismsDiffer>false</organismsDiffer>
    <experiments>3</experiments>
</comment>
<comment type="interaction">
    <interactant intactId="EBI-15191931">
        <id>Q9M126</id>
    </interactant>
    <interactant intactId="EBI-25516740">
        <id>Q9FI23</id>
        <label>PDF1.2A</label>
    </interactant>
    <organismsDiffer>false</organismsDiffer>
    <experiments>3</experiments>
</comment>
<comment type="interaction">
    <interactant intactId="EBI-15191931">
        <id>Q9M126</id>
    </interactant>
    <interactant intactId="EBI-15194725">
        <id>Q9FPW6</id>
        <label>POB1</label>
    </interactant>
    <organismsDiffer>false</organismsDiffer>
    <experiments>3</experiments>
</comment>
<comment type="interaction">
    <interactant intactId="EBI-15191931">
        <id>Q9M126</id>
    </interactant>
    <interactant intactId="EBI-1792431">
        <id>Q9LVI4</id>
        <label>TIFY6B</label>
    </interactant>
    <organismsDiffer>false</organismsDiffer>
    <experiments>3</experiments>
</comment>
<comment type="subcellular location">
    <subcellularLocation>
        <location evidence="4">Membrane</location>
        <topology evidence="1">Single-pass membrane protein</topology>
    </subcellularLocation>
    <subcellularLocation>
        <location evidence="2 4">Nucleus</location>
    </subcellularLocation>
    <text evidence="4">Localized primarily in plasma membrane or endoplasmic reticulum membrane as dormant form and, upon specific stress or signal, is processed into a transcriptionally active and nuclear form after a proteolytic cleavage through regulated intramembrane proteolysis (RIP).</text>
</comment>
<comment type="alternative products">
    <event type="alternative splicing"/>
    <isoform>
        <id>Q9M126-1</id>
        <name>1</name>
        <sequence type="displayed"/>
    </isoform>
    <isoform>
        <id>Q9M126-2</id>
        <name>2</name>
        <sequence type="described" ref="VSP_032053"/>
    </isoform>
    <isoform>
        <id>Q9M126-3</id>
        <name>3</name>
        <sequence type="described" ref="VSP_032054 VSP_032055"/>
    </isoform>
</comment>
<comment type="induction">
    <text evidence="4">By salt stress and abscisic acid (ABA) in roots.</text>
</comment>
<comment type="domain">
    <text evidence="2">The NAC domain includes a DNA binding domain and a dimerization domain.</text>
</comment>
<comment type="disruption phenotype">
    <text evidence="4">No visible phenotype under normal growth conditions, but mutant plants mutant exhibit reduced sensitivity to high salinity during seed germination and seedling development.</text>
</comment>
<comment type="sequence caution" evidence="7">
    <conflict type="erroneous gene model prediction">
        <sequence resource="EMBL-CDS" id="AAC62781"/>
    </conflict>
</comment>
<protein>
    <recommendedName>
        <fullName evidence="5">NAC domain-containing protein 69</fullName>
        <shortName evidence="5">ANAC069</shortName>
    </recommendedName>
    <alternativeName>
        <fullName>Protein NAC WITH TRANSMEMBRANE MOTIF 2</fullName>
    </alternativeName>
    <alternativeName>
        <fullName evidence="6">Protein NTM1-like 13</fullName>
    </alternativeName>
</protein>